<evidence type="ECO:0000255" key="1"/>
<evidence type="ECO:0000269" key="2">
    <source>
    </source>
</evidence>
<evidence type="ECO:0000305" key="3"/>
<evidence type="ECO:0000312" key="4">
    <source>
        <dbReference type="EMBL" id="ACJ06766.1"/>
    </source>
</evidence>
<proteinExistence type="evidence at protein level"/>
<feature type="signal peptide" evidence="1">
    <location>
        <begin position="1"/>
        <end position="19"/>
    </location>
</feature>
<feature type="chain" id="PRO_0000408775" description="Prisilkin-39" evidence="1">
    <location>
        <begin position="20"/>
        <end position="406"/>
    </location>
</feature>
<feature type="transmembrane region" description="Helical" evidence="1">
    <location>
        <begin position="26"/>
        <end position="48"/>
    </location>
</feature>
<feature type="transmembrane region" description="Helical" evidence="1">
    <location>
        <begin position="58"/>
        <end position="80"/>
    </location>
</feature>
<feature type="region of interest" description="10 X 12 AA tandem repeat of G-G-Y-[SG]-G-Y-[GS]-Y-G-Y-P-[AT]" evidence="3">
    <location>
        <begin position="78"/>
        <end position="197"/>
    </location>
</feature>
<name>PRSKL_PINFU</name>
<organism>
    <name type="scientific">Pinctada fucata</name>
    <name type="common">Akoya pearl oyster</name>
    <name type="synonym">Pinctada imbricata fucata</name>
    <dbReference type="NCBI Taxonomy" id="50426"/>
    <lineage>
        <taxon>Eukaryota</taxon>
        <taxon>Metazoa</taxon>
        <taxon>Spiralia</taxon>
        <taxon>Lophotrochozoa</taxon>
        <taxon>Mollusca</taxon>
        <taxon>Bivalvia</taxon>
        <taxon>Autobranchia</taxon>
        <taxon>Pteriomorphia</taxon>
        <taxon>Pterioida</taxon>
        <taxon>Pterioidea</taxon>
        <taxon>Pteriidae</taxon>
        <taxon>Pinctada</taxon>
    </lineage>
</organism>
<reference evidence="3 4" key="1">
    <citation type="journal article" date="2009" name="J. Biol. Chem.">
        <title>Cloning and characterization of Prisilkin-39, a novel matrix protein serving a dual role in the prismatic layer formation from the oyster Pinctada fucata.</title>
        <authorList>
            <person name="Kong Y."/>
            <person name="Jing G."/>
            <person name="Yan Z."/>
            <person name="Li C."/>
            <person name="Gong N."/>
            <person name="Zhu F."/>
            <person name="Li D."/>
            <person name="Zhang Y."/>
            <person name="Zheng G."/>
            <person name="Wang H."/>
            <person name="Xie L."/>
            <person name="Zhang R."/>
        </authorList>
    </citation>
    <scope>NUCLEOTIDE SEQUENCE [MRNA]</scope>
    <scope>FUNCTION</scope>
    <scope>TISSUE SPECIFICITY</scope>
    <source>
        <tissue evidence="2">Mantle</tissue>
    </source>
</reference>
<sequence length="406" mass="41362">MKGFLTLLLVCAILSTGYCQSRRRAALTGLVAGATIGALASGGLGAGAGGFGVGGFPVGVGAVGIPVAVGGGIPYGYGGYSGYGYGYPAGGYGGYSYGYPTGGYGGYSYGYPTGGYGGYSYGYPTGGYGGYSYGYPTGGYSGYSYGYPTGGYSGYSYGYPTGGYSGYSYGYPTGGYSGYSYGYPTGGYSGYSYGYPTGGYSGYSYPTGGYSGYSYSSTPGYGYYGSGSGMGGMRSGYSYYSSPAPSYYSSGSMTPGYGYYSSGSGIGGGMGSGYSYYSSPAPSYYSSSVSPGYGYYGSGSGMRGYGYYSSSTPMYYGSRSTGYGPFSSGLGGMGSGYSYYSSSTPSYYSSGSMTPGYGYYGSTSYPGPGYGSYSYRTTSYQPSSYGYSSYGTTYPGHGHWHGHKDC</sequence>
<dbReference type="EMBL" id="EU921665">
    <property type="protein sequence ID" value="ACJ06766.1"/>
    <property type="molecule type" value="mRNA"/>
</dbReference>
<dbReference type="GO" id="GO:0016020">
    <property type="term" value="C:membrane"/>
    <property type="evidence" value="ECO:0007669"/>
    <property type="project" value="UniProtKB-SubCell"/>
</dbReference>
<dbReference type="GO" id="GO:0008061">
    <property type="term" value="F:chitin binding"/>
    <property type="evidence" value="ECO:0007669"/>
    <property type="project" value="UniProtKB-KW"/>
</dbReference>
<dbReference type="GO" id="GO:0031214">
    <property type="term" value="P:biomineral tissue development"/>
    <property type="evidence" value="ECO:0007669"/>
    <property type="project" value="UniProtKB-KW"/>
</dbReference>
<protein>
    <recommendedName>
        <fullName evidence="4">Prisilkin-39</fullName>
    </recommendedName>
</protein>
<keyword id="KW-0091">Biomineralization</keyword>
<keyword id="KW-0147">Chitin-binding</keyword>
<keyword id="KW-0472">Membrane</keyword>
<keyword id="KW-0732">Signal</keyword>
<keyword id="KW-0812">Transmembrane</keyword>
<keyword id="KW-1133">Transmembrane helix</keyword>
<comment type="function">
    <text evidence="2">Binds chitin and may serve as a framework constituent participating in shell formation. Inhibits aragonite precipitation and may regulate aragonite growth during shell layer formation. Does not affect calcite crystallization.</text>
</comment>
<comment type="subcellular location">
    <subcellularLocation>
        <location evidence="1">Membrane</location>
        <topology evidence="1">Multi-pass membrane protein</topology>
    </subcellularLocation>
</comment>
<comment type="tissue specificity">
    <text evidence="2">Expression is confined to the prism and organic layers of the shell with no expression detected in the nacreous shell layer. Also expressed in the mantle edge, extrapallial fluid, hemolymph and, to a lesser extent, in the viscus (at protein level). In the mantle, localizes to inner epithelial cells of the outer fold and the outer epithelial cells of the middle fold at the bottom of the periostracal groove.</text>
</comment>
<accession>C0J7L8</accession>